<comment type="function">
    <text evidence="3">Catalyzes glutathione (GSH)-dependent reduction of glutathionyl-hydroquinones (GS-HQs) to the corresponding hydroquinones. Can act on halogenated substrates such as GS-2,6-dichloro-p-hydroquinone (GS-DiCH) and GS-trichloro-p-hydroquinone (GS-TriCH). Involved in the degradation of pentachlorophenol (PCP), a toxic pollutant.</text>
</comment>
<comment type="catalytic activity">
    <reaction evidence="3">
        <text>2-(glutathione-S-yl)-hydroquinone + glutathione = hydroquinone + glutathione disulfide</text>
        <dbReference type="Rhea" id="RHEA:51936"/>
        <dbReference type="ChEBI" id="CHEBI:17594"/>
        <dbReference type="ChEBI" id="CHEBI:57925"/>
        <dbReference type="ChEBI" id="CHEBI:58297"/>
        <dbReference type="ChEBI" id="CHEBI:134616"/>
        <dbReference type="EC" id="1.8.5.7"/>
    </reaction>
</comment>
<comment type="subunit">
    <text evidence="4">Homodimer.</text>
</comment>
<comment type="disruption phenotype">
    <text evidence="3">Disruption mutant does not have GS-hydroquinone lyase activity, is more sensitive to PCP toxicity and has a significantly decreased PCP degradation rate.</text>
</comment>
<comment type="similarity">
    <text evidence="6">Belongs to the GST superfamily. Xi-class GSH transferase family.</text>
</comment>
<evidence type="ECO:0000250" key="1">
    <source>
        <dbReference type="UniProtKB" id="P42620"/>
    </source>
</evidence>
<evidence type="ECO:0000255" key="2">
    <source>
        <dbReference type="PROSITE-ProRule" id="PRU00685"/>
    </source>
</evidence>
<evidence type="ECO:0000269" key="3">
    <source>
    </source>
</evidence>
<evidence type="ECO:0000269" key="4">
    <source>
    </source>
</evidence>
<evidence type="ECO:0000303" key="5">
    <source>
    </source>
</evidence>
<evidence type="ECO:0000305" key="6"/>
<evidence type="ECO:0007744" key="7">
    <source>
        <dbReference type="PDB" id="4FQU"/>
    </source>
</evidence>
<evidence type="ECO:0007829" key="8">
    <source>
        <dbReference type="PDB" id="4FQU"/>
    </source>
</evidence>
<keyword id="KW-0002">3D-structure</keyword>
<keyword id="KW-0560">Oxidoreductase</keyword>
<accession>Q8KN33</accession>
<organism>
    <name type="scientific">Sphingobium chlorophenolicum</name>
    <dbReference type="NCBI Taxonomy" id="46429"/>
    <lineage>
        <taxon>Bacteria</taxon>
        <taxon>Pseudomonadati</taxon>
        <taxon>Pseudomonadota</taxon>
        <taxon>Alphaproteobacteria</taxon>
        <taxon>Sphingomonadales</taxon>
        <taxon>Sphingomonadaceae</taxon>
        <taxon>Sphingobium</taxon>
    </lineage>
</organism>
<reference key="1">
    <citation type="journal article" date="2002" name="J. Bacteriol.">
        <title>Organization and regulation of pentachlorophenol-degrading genes in Sphingobium chlorophenolicum ATCC 39723.</title>
        <authorList>
            <person name="Cai M."/>
            <person name="Xun L."/>
        </authorList>
    </citation>
    <scope>NUCLEOTIDE SEQUENCE [GENOMIC DNA]</scope>
    <source>
        <strain>ATCC 39723 / DSM 6824 / L-1</strain>
    </source>
</reference>
<reference key="2">
    <citation type="journal article" date="2008" name="J. Bacteriol.">
        <title>Maintenance role of a glutathionyl-hydroquinone lyase (PcpF) in pentachlorophenol degradation by Sphingobium chlorophenolicum ATCC 39723.</title>
        <authorList>
            <person name="Huang Y."/>
            <person name="Xun R."/>
            <person name="Chen G."/>
            <person name="Xun L."/>
        </authorList>
    </citation>
    <scope>FUNCTION</scope>
    <scope>CATALYTIC ACTIVITY</scope>
    <scope>DISRUPTION PHENOTYPE</scope>
    <scope>MUTAGENESIS OF CYS-53 AND CYS-248</scope>
    <source>
        <strain>ATCC 39723 / DSM 6824 / L-1</strain>
    </source>
</reference>
<reference evidence="7" key="3">
    <citation type="journal article" date="2012" name="J. Biol. Chem.">
        <title>Structural understanding of GSH-dependent reduction mechanism of glutathionyl-hydroquinone reductases.</title>
        <authorList>
            <person name="Green A.R."/>
            <person name="Hayes R.P."/>
            <person name="Xun L."/>
            <person name="Kang C."/>
        </authorList>
    </citation>
    <scope>X-RAY CRYSTALLOGRAPHY (3.00 ANGSTROMS)</scope>
    <scope>SUBUNIT</scope>
</reference>
<feature type="chain" id="PRO_0000441028" description="Glutathionyl-hydroquinone reductase PcpF">
    <location>
        <begin position="1"/>
        <end position="313"/>
    </location>
</feature>
<feature type="domain" description="GST C-terminal" evidence="2">
    <location>
        <begin position="161"/>
        <end position="285"/>
    </location>
</feature>
<feature type="active site" description="Nucleophile" evidence="1">
    <location>
        <position position="53"/>
    </location>
</feature>
<feature type="active site" description="Proton donor/acceptor" evidence="1">
    <location>
        <position position="184"/>
    </location>
</feature>
<feature type="binding site" evidence="1">
    <location>
        <position position="86"/>
    </location>
    <ligand>
        <name>glutathione</name>
        <dbReference type="ChEBI" id="CHEBI:57925"/>
    </ligand>
</feature>
<feature type="binding site" evidence="1">
    <location>
        <begin position="119"/>
        <end position="122"/>
    </location>
    <ligand>
        <name>glutathione</name>
        <dbReference type="ChEBI" id="CHEBI:57925"/>
    </ligand>
</feature>
<feature type="binding site" evidence="1">
    <location>
        <begin position="137"/>
        <end position="138"/>
    </location>
    <ligand>
        <name>glutathione</name>
        <dbReference type="ChEBI" id="CHEBI:57925"/>
    </ligand>
</feature>
<feature type="mutagenesis site" description="Loss of activity." evidence="3">
    <original>C</original>
    <variation>A</variation>
    <location>
        <position position="53"/>
    </location>
</feature>
<feature type="mutagenesis site" description="No change in activity." evidence="3">
    <original>C</original>
    <variation>A</variation>
    <location>
        <position position="248"/>
    </location>
</feature>
<feature type="strand" evidence="8">
    <location>
        <begin position="3"/>
        <end position="10"/>
    </location>
</feature>
<feature type="strand" evidence="8">
    <location>
        <begin position="19"/>
        <end position="22"/>
    </location>
</feature>
<feature type="strand" evidence="8">
    <location>
        <begin position="35"/>
        <end position="37"/>
    </location>
</feature>
<feature type="turn" evidence="8">
    <location>
        <begin position="42"/>
        <end position="44"/>
    </location>
</feature>
<feature type="strand" evidence="8">
    <location>
        <begin position="45"/>
        <end position="49"/>
    </location>
</feature>
<feature type="helix" evidence="8">
    <location>
        <begin position="54"/>
        <end position="65"/>
    </location>
</feature>
<feature type="turn" evidence="8">
    <location>
        <begin position="69"/>
        <end position="71"/>
    </location>
</feature>
<feature type="strand" evidence="8">
    <location>
        <begin position="72"/>
        <end position="76"/>
    </location>
</feature>
<feature type="strand" evidence="8">
    <location>
        <begin position="85"/>
        <end position="87"/>
    </location>
</feature>
<feature type="turn" evidence="8">
    <location>
        <begin position="98"/>
        <end position="100"/>
    </location>
</feature>
<feature type="helix" evidence="8">
    <location>
        <begin position="106"/>
        <end position="112"/>
    </location>
</feature>
<feature type="strand" evidence="8">
    <location>
        <begin position="124"/>
        <end position="127"/>
    </location>
</feature>
<feature type="turn" evidence="8">
    <location>
        <begin position="128"/>
        <end position="131"/>
    </location>
</feature>
<feature type="strand" evidence="8">
    <location>
        <begin position="132"/>
        <end position="135"/>
    </location>
</feature>
<feature type="helix" evidence="8">
    <location>
        <begin position="138"/>
        <end position="146"/>
    </location>
</feature>
<feature type="helix" evidence="8">
    <location>
        <begin position="150"/>
        <end position="152"/>
    </location>
</feature>
<feature type="helix" evidence="8">
    <location>
        <begin position="162"/>
        <end position="164"/>
    </location>
</feature>
<feature type="helix" evidence="8">
    <location>
        <begin position="165"/>
        <end position="178"/>
    </location>
</feature>
<feature type="turn" evidence="8">
    <location>
        <begin position="179"/>
        <end position="181"/>
    </location>
</feature>
<feature type="helix" evidence="8">
    <location>
        <begin position="182"/>
        <end position="187"/>
    </location>
</feature>
<feature type="helix" evidence="8">
    <location>
        <begin position="192"/>
        <end position="212"/>
    </location>
</feature>
<feature type="turn" evidence="8">
    <location>
        <begin position="213"/>
        <end position="215"/>
    </location>
</feature>
<feature type="strand" evidence="8">
    <location>
        <begin position="217"/>
        <end position="220"/>
    </location>
</feature>
<feature type="helix" evidence="8">
    <location>
        <begin position="226"/>
        <end position="238"/>
    </location>
</feature>
<feature type="turn" evidence="8">
    <location>
        <begin position="239"/>
        <end position="241"/>
    </location>
</feature>
<feature type="helix" evidence="8">
    <location>
        <begin position="242"/>
        <end position="245"/>
    </location>
</feature>
<feature type="helix" evidence="8">
    <location>
        <begin position="253"/>
        <end position="255"/>
    </location>
</feature>
<feature type="helix" evidence="8">
    <location>
        <begin position="257"/>
        <end position="268"/>
    </location>
</feature>
<feature type="turn" evidence="8">
    <location>
        <begin position="270"/>
        <end position="272"/>
    </location>
</feature>
<feature type="helix" evidence="8">
    <location>
        <begin position="273"/>
        <end position="275"/>
    </location>
</feature>
<feature type="helix" evidence="8">
    <location>
        <begin position="278"/>
        <end position="287"/>
    </location>
</feature>
<feature type="turn" evidence="8">
    <location>
        <begin position="290"/>
        <end position="292"/>
    </location>
</feature>
<name>PCPF_SPHCR</name>
<dbReference type="EC" id="1.8.5.7" evidence="3"/>
<dbReference type="EMBL" id="AF512952">
    <property type="protein sequence ID" value="AAM96671.1"/>
    <property type="molecule type" value="Genomic_DNA"/>
</dbReference>
<dbReference type="PDB" id="4FQU">
    <property type="method" value="X-ray"/>
    <property type="resolution" value="3.00 A"/>
    <property type="chains" value="A/B/C/D/E/F/G/H=1-313"/>
</dbReference>
<dbReference type="PDBsum" id="4FQU"/>
<dbReference type="SMR" id="Q8KN33"/>
<dbReference type="eggNOG" id="COG0435">
    <property type="taxonomic scope" value="Bacteria"/>
</dbReference>
<dbReference type="EvolutionaryTrace" id="Q8KN33"/>
<dbReference type="GO" id="GO:0005737">
    <property type="term" value="C:cytoplasm"/>
    <property type="evidence" value="ECO:0007669"/>
    <property type="project" value="TreeGrafter"/>
</dbReference>
<dbReference type="GO" id="GO:0004364">
    <property type="term" value="F:glutathione transferase activity"/>
    <property type="evidence" value="ECO:0007669"/>
    <property type="project" value="InterPro"/>
</dbReference>
<dbReference type="GO" id="GO:0016491">
    <property type="term" value="F:oxidoreductase activity"/>
    <property type="evidence" value="ECO:0007669"/>
    <property type="project" value="UniProtKB-KW"/>
</dbReference>
<dbReference type="CDD" id="cd03190">
    <property type="entry name" value="GST_C_Omega_like"/>
    <property type="match status" value="1"/>
</dbReference>
<dbReference type="Gene3D" id="1.20.1050.10">
    <property type="match status" value="1"/>
</dbReference>
<dbReference type="Gene3D" id="3.40.30.10">
    <property type="entry name" value="Glutaredoxin"/>
    <property type="match status" value="1"/>
</dbReference>
<dbReference type="InterPro" id="IPR010987">
    <property type="entry name" value="Glutathione-S-Trfase_C-like"/>
</dbReference>
<dbReference type="InterPro" id="IPR036282">
    <property type="entry name" value="Glutathione-S-Trfase_C_sf"/>
</dbReference>
<dbReference type="InterPro" id="IPR004045">
    <property type="entry name" value="Glutathione_S-Trfase_N"/>
</dbReference>
<dbReference type="InterPro" id="IPR047047">
    <property type="entry name" value="GST_Omega-like_C"/>
</dbReference>
<dbReference type="InterPro" id="IPR016639">
    <property type="entry name" value="GST_Omega/GSH"/>
</dbReference>
<dbReference type="InterPro" id="IPR036249">
    <property type="entry name" value="Thioredoxin-like_sf"/>
</dbReference>
<dbReference type="PANTHER" id="PTHR32419:SF6">
    <property type="entry name" value="GLUTATHIONE S-TRANSFERASE OMEGA-LIKE 1-RELATED"/>
    <property type="match status" value="1"/>
</dbReference>
<dbReference type="PANTHER" id="PTHR32419">
    <property type="entry name" value="GLUTATHIONYL-HYDROQUINONE REDUCTASE"/>
    <property type="match status" value="1"/>
</dbReference>
<dbReference type="Pfam" id="PF13410">
    <property type="entry name" value="GST_C_2"/>
    <property type="match status" value="1"/>
</dbReference>
<dbReference type="Pfam" id="PF13409">
    <property type="entry name" value="GST_N_2"/>
    <property type="match status" value="1"/>
</dbReference>
<dbReference type="PIRSF" id="PIRSF015753">
    <property type="entry name" value="GST"/>
    <property type="match status" value="1"/>
</dbReference>
<dbReference type="SFLD" id="SFLDG01206">
    <property type="entry name" value="Xi.1"/>
    <property type="match status" value="1"/>
</dbReference>
<dbReference type="SFLD" id="SFLDG01148">
    <property type="entry name" value="Xi_(cytGST)"/>
    <property type="match status" value="1"/>
</dbReference>
<dbReference type="SUPFAM" id="SSF47616">
    <property type="entry name" value="GST C-terminal domain-like"/>
    <property type="match status" value="1"/>
</dbReference>
<dbReference type="SUPFAM" id="SSF52833">
    <property type="entry name" value="Thioredoxin-like"/>
    <property type="match status" value="1"/>
</dbReference>
<dbReference type="PROSITE" id="PS50405">
    <property type="entry name" value="GST_CTER"/>
    <property type="match status" value="1"/>
</dbReference>
<proteinExistence type="evidence at protein level"/>
<sequence length="313" mass="35382">MGLLIDGVWRDAWYDTKSSGGRFVRKESQYRGGLDAGFRGEPGRYHLYAGFACPWAHRVLIMRALKGLEEMISVSMVNAYMGENGWTFLPGDDVVPDSINGADYLYQVYTAADPTYTGRVTIPILWDKVEKRILNNESSEIIRILNSAFDDVGALPGDYYPAEFRPEIDRINARVYETLNNGVYRSGFATTQEAYEEAFYPLFDTLDWLEEHLTGREWLVGDRLTEADIRLFPTLVRFDAIYHGHFKCNLRRIADYPNLSRLVGKLASHERVAPTINLRHAKAHYYGSHPSVNPTGIVPVGPAQPLPGLTLQS</sequence>
<protein>
    <recommendedName>
        <fullName evidence="6">Glutathionyl-hydroquinone reductase PcpF</fullName>
        <shortName evidence="6">GS-HQR</shortName>
        <ecNumber evidence="3">1.8.5.7</ecNumber>
    </recommendedName>
</protein>
<gene>
    <name evidence="5" type="primary">pcpF</name>
</gene>